<gene>
    <name evidence="1" type="primary">tfb</name>
    <name type="ordered locus">Pisl_1667</name>
</gene>
<feature type="chain" id="PRO_1000080116" description="Transcription initiation factor IIB">
    <location>
        <begin position="1"/>
        <end position="333"/>
    </location>
</feature>
<feature type="repeat" description="1">
    <location>
        <begin position="149"/>
        <end position="232"/>
    </location>
</feature>
<feature type="repeat" description="2">
    <location>
        <begin position="243"/>
        <end position="324"/>
    </location>
</feature>
<feature type="zinc finger region" description="TFIIB-type" evidence="2">
    <location>
        <begin position="33"/>
        <end position="64"/>
    </location>
</feature>
<feature type="binding site" evidence="2">
    <location>
        <position position="37"/>
    </location>
    <ligand>
        <name>Zn(2+)</name>
        <dbReference type="ChEBI" id="CHEBI:29105"/>
    </ligand>
</feature>
<feature type="binding site" evidence="2">
    <location>
        <position position="40"/>
    </location>
    <ligand>
        <name>Zn(2+)</name>
        <dbReference type="ChEBI" id="CHEBI:29105"/>
    </ligand>
</feature>
<feature type="binding site" evidence="2">
    <location>
        <position position="56"/>
    </location>
    <ligand>
        <name>Zn(2+)</name>
        <dbReference type="ChEBI" id="CHEBI:29105"/>
    </ligand>
</feature>
<feature type="binding site" evidence="2">
    <location>
        <position position="59"/>
    </location>
    <ligand>
        <name>Zn(2+)</name>
        <dbReference type="ChEBI" id="CHEBI:29105"/>
    </ligand>
</feature>
<comment type="function">
    <text evidence="1">Stabilizes TBP binding to an archaeal box-A promoter. Also responsible for recruiting RNA polymerase II to the pre-initiation complex (DNA-TBP-TFIIB).</text>
</comment>
<comment type="similarity">
    <text evidence="1">Belongs to the TFIIB family.</text>
</comment>
<sequence>MSSSSPTSSGKPLKLRIDRDNEGYLSLVTDTGEVYRCPICGNDRFVYNYERGEIVCIVCGAVVQEQLLDLGPEWRAFTSEEKGQRARTGAPLTRLISEALTTVIDWRDKDVSGKELDIKRKLEVIRLRKWQTRARVQTSYERNFIQAAQELERLRSSMGVPRPCVEQALEIYRQALEKELVRGRSVEAMAAAALYMACRMMKMPRPLDELVRYTKASRREVARCYRLLLRELNVKVPISDPVLYISRIAEQLKLSGEVVKTAIEILQKAKKAGITAGKDPAGLAAAAVYIASLLHGDNRTQKDFAVAAGVTEVTVRNRYKELAKTLNIKVPVK</sequence>
<keyword id="KW-0479">Metal-binding</keyword>
<keyword id="KW-0677">Repeat</keyword>
<keyword id="KW-0804">Transcription</keyword>
<keyword id="KW-0805">Transcription regulation</keyword>
<keyword id="KW-0862">Zinc</keyword>
<keyword id="KW-0863">Zinc-finger</keyword>
<protein>
    <recommendedName>
        <fullName evidence="1">Transcription initiation factor IIB</fullName>
        <shortName evidence="1">TFIIB</shortName>
    </recommendedName>
</protein>
<organism>
    <name type="scientific">Pyrobaculum islandicum (strain DSM 4184 / JCM 9189 / GEO3)</name>
    <dbReference type="NCBI Taxonomy" id="384616"/>
    <lineage>
        <taxon>Archaea</taxon>
        <taxon>Thermoproteota</taxon>
        <taxon>Thermoprotei</taxon>
        <taxon>Thermoproteales</taxon>
        <taxon>Thermoproteaceae</taxon>
        <taxon>Pyrobaculum</taxon>
    </lineage>
</organism>
<accession>A1RV37</accession>
<evidence type="ECO:0000255" key="1">
    <source>
        <dbReference type="HAMAP-Rule" id="MF_00383"/>
    </source>
</evidence>
<evidence type="ECO:0000255" key="2">
    <source>
        <dbReference type="PROSITE-ProRule" id="PRU00469"/>
    </source>
</evidence>
<name>TF2B_PYRIL</name>
<proteinExistence type="inferred from homology"/>
<reference key="1">
    <citation type="submission" date="2006-12" db="EMBL/GenBank/DDBJ databases">
        <title>Complete sequence of Pyrobaculum islandicum DSM 4184.</title>
        <authorList>
            <person name="Copeland A."/>
            <person name="Lucas S."/>
            <person name="Lapidus A."/>
            <person name="Barry K."/>
            <person name="Detter J.C."/>
            <person name="Glavina del Rio T."/>
            <person name="Dalin E."/>
            <person name="Tice H."/>
            <person name="Pitluck S."/>
            <person name="Meincke L."/>
            <person name="Brettin T."/>
            <person name="Bruce D."/>
            <person name="Han C."/>
            <person name="Tapia R."/>
            <person name="Gilna P."/>
            <person name="Schmutz J."/>
            <person name="Larimer F."/>
            <person name="Land M."/>
            <person name="Hauser L."/>
            <person name="Kyrpides N."/>
            <person name="Mikhailova N."/>
            <person name="Cozen A.E."/>
            <person name="Fitz-Gibbon S.T."/>
            <person name="House C.H."/>
            <person name="Saltikov C."/>
            <person name="Lowe T."/>
            <person name="Richardson P."/>
        </authorList>
    </citation>
    <scope>NUCLEOTIDE SEQUENCE [LARGE SCALE GENOMIC DNA]</scope>
    <source>
        <strain>DSM 4184 / JCM 9189 / GEO3</strain>
    </source>
</reference>
<dbReference type="EMBL" id="CP000504">
    <property type="protein sequence ID" value="ABL88819.1"/>
    <property type="molecule type" value="Genomic_DNA"/>
</dbReference>
<dbReference type="RefSeq" id="WP_011763394.1">
    <property type="nucleotide sequence ID" value="NC_008701.1"/>
</dbReference>
<dbReference type="SMR" id="A1RV37"/>
<dbReference type="STRING" id="384616.Pisl_1667"/>
<dbReference type="GeneID" id="4617859"/>
<dbReference type="KEGG" id="pis:Pisl_1667"/>
<dbReference type="eggNOG" id="arCOG01981">
    <property type="taxonomic scope" value="Archaea"/>
</dbReference>
<dbReference type="HOGENOM" id="CLU_043736_0_1_2"/>
<dbReference type="OrthoDB" id="7429at2157"/>
<dbReference type="Proteomes" id="UP000002595">
    <property type="component" value="Chromosome"/>
</dbReference>
<dbReference type="GO" id="GO:0097550">
    <property type="term" value="C:transcription preinitiation complex"/>
    <property type="evidence" value="ECO:0007669"/>
    <property type="project" value="TreeGrafter"/>
</dbReference>
<dbReference type="GO" id="GO:0003700">
    <property type="term" value="F:DNA-binding transcription factor activity"/>
    <property type="evidence" value="ECO:0007669"/>
    <property type="project" value="UniProtKB-UniRule"/>
</dbReference>
<dbReference type="GO" id="GO:0017025">
    <property type="term" value="F:TBP-class protein binding"/>
    <property type="evidence" value="ECO:0007669"/>
    <property type="project" value="InterPro"/>
</dbReference>
<dbReference type="GO" id="GO:0008270">
    <property type="term" value="F:zinc ion binding"/>
    <property type="evidence" value="ECO:0007669"/>
    <property type="project" value="UniProtKB-UniRule"/>
</dbReference>
<dbReference type="GO" id="GO:0070897">
    <property type="term" value="P:transcription preinitiation complex assembly"/>
    <property type="evidence" value="ECO:0007669"/>
    <property type="project" value="InterPro"/>
</dbReference>
<dbReference type="CDD" id="cd20549">
    <property type="entry name" value="CYCLIN_TFIIB_archaea_like_rpt1"/>
    <property type="match status" value="1"/>
</dbReference>
<dbReference type="CDD" id="cd20550">
    <property type="entry name" value="CYCLIN_TFIIB_archaea_like_rpt2"/>
    <property type="match status" value="1"/>
</dbReference>
<dbReference type="FunFam" id="1.10.472.10:FF:000023">
    <property type="entry name" value="Transcription initiation factor IIB"/>
    <property type="match status" value="1"/>
</dbReference>
<dbReference type="FunFam" id="1.10.472.170:FF:000001">
    <property type="entry name" value="Transcription initiation factor IIB"/>
    <property type="match status" value="1"/>
</dbReference>
<dbReference type="Gene3D" id="1.10.472.170">
    <property type="match status" value="1"/>
</dbReference>
<dbReference type="Gene3D" id="1.10.472.10">
    <property type="entry name" value="Cyclin-like"/>
    <property type="match status" value="1"/>
</dbReference>
<dbReference type="HAMAP" id="MF_00383">
    <property type="entry name" value="TF2B_arch"/>
    <property type="match status" value="1"/>
</dbReference>
<dbReference type="InterPro" id="IPR013763">
    <property type="entry name" value="Cyclin-like_dom"/>
</dbReference>
<dbReference type="InterPro" id="IPR036915">
    <property type="entry name" value="Cyclin-like_sf"/>
</dbReference>
<dbReference type="InterPro" id="IPR000812">
    <property type="entry name" value="TFIIB"/>
</dbReference>
<dbReference type="InterPro" id="IPR023484">
    <property type="entry name" value="TFIIB_arc"/>
</dbReference>
<dbReference type="InterPro" id="IPR023486">
    <property type="entry name" value="TFIIB_CS"/>
</dbReference>
<dbReference type="InterPro" id="IPR013150">
    <property type="entry name" value="TFIIB_cyclin"/>
</dbReference>
<dbReference type="InterPro" id="IPR013137">
    <property type="entry name" value="Znf_TFIIB"/>
</dbReference>
<dbReference type="NCBIfam" id="NF001658">
    <property type="entry name" value="PRK00423.1"/>
    <property type="match status" value="1"/>
</dbReference>
<dbReference type="PANTHER" id="PTHR11618:SF13">
    <property type="entry name" value="TRANSCRIPTION INITIATION FACTOR IIB"/>
    <property type="match status" value="1"/>
</dbReference>
<dbReference type="PANTHER" id="PTHR11618">
    <property type="entry name" value="TRANSCRIPTION INITIATION FACTOR IIB-RELATED"/>
    <property type="match status" value="1"/>
</dbReference>
<dbReference type="Pfam" id="PF00382">
    <property type="entry name" value="TFIIB"/>
    <property type="match status" value="2"/>
</dbReference>
<dbReference type="Pfam" id="PF08271">
    <property type="entry name" value="Zn_Ribbon_TF"/>
    <property type="match status" value="1"/>
</dbReference>
<dbReference type="PRINTS" id="PR00685">
    <property type="entry name" value="TIFACTORIIB"/>
</dbReference>
<dbReference type="SMART" id="SM00385">
    <property type="entry name" value="CYCLIN"/>
    <property type="match status" value="2"/>
</dbReference>
<dbReference type="SUPFAM" id="SSF47954">
    <property type="entry name" value="Cyclin-like"/>
    <property type="match status" value="2"/>
</dbReference>
<dbReference type="SUPFAM" id="SSF57783">
    <property type="entry name" value="Zinc beta-ribbon"/>
    <property type="match status" value="1"/>
</dbReference>
<dbReference type="PROSITE" id="PS00782">
    <property type="entry name" value="TFIIB"/>
    <property type="match status" value="2"/>
</dbReference>
<dbReference type="PROSITE" id="PS51134">
    <property type="entry name" value="ZF_TFIIB"/>
    <property type="match status" value="1"/>
</dbReference>